<protein>
    <recommendedName>
        <fullName>Endonuclease YhcR</fullName>
        <ecNumber evidence="6">3.1.31.-</ecNumber>
    </recommendedName>
</protein>
<gene>
    <name type="primary">yhcR</name>
    <name type="ordered locus">BSU09190</name>
</gene>
<feature type="signal peptide" evidence="2">
    <location>
        <begin position="1"/>
        <end position="46"/>
    </location>
</feature>
<feature type="chain" id="PRO_0000000040" description="Endonuclease YhcR">
    <location>
        <begin position="47"/>
        <end position="1185"/>
    </location>
</feature>
<feature type="propeptide" id="PRO_0000445194" description="Removed by sortase" evidence="4">
    <location>
        <begin position="1186"/>
        <end position="1217"/>
    </location>
</feature>
<feature type="domain" description="TNase-like" evidence="3">
    <location>
        <begin position="376"/>
        <end position="517"/>
    </location>
</feature>
<feature type="region of interest" description="Phosphoesterase">
    <location>
        <begin position="590"/>
        <end position="828"/>
    </location>
</feature>
<feature type="region of interest" description="5'-nucleotidase">
    <location>
        <begin position="829"/>
        <end position="1085"/>
    </location>
</feature>
<feature type="region of interest" description="Disordered" evidence="5">
    <location>
        <begin position="1087"/>
        <end position="1142"/>
    </location>
</feature>
<feature type="short sequence motif" description="LPXTG sorting signal" evidence="4">
    <location>
        <begin position="1182"/>
        <end position="1186"/>
    </location>
</feature>
<feature type="compositionally biased region" description="Acidic residues" evidence="5">
    <location>
        <begin position="1089"/>
        <end position="1110"/>
    </location>
</feature>
<feature type="compositionally biased region" description="Basic and acidic residues" evidence="5">
    <location>
        <begin position="1112"/>
        <end position="1129"/>
    </location>
</feature>
<feature type="active site" evidence="3">
    <location>
        <position position="404"/>
    </location>
</feature>
<feature type="active site" evidence="3">
    <location>
        <position position="412"/>
    </location>
</feature>
<feature type="active site" evidence="3">
    <location>
        <position position="460"/>
    </location>
</feature>
<feature type="binding site" evidence="1">
    <location>
        <position position="597"/>
    </location>
    <ligand>
        <name>a divalent metal cation</name>
        <dbReference type="ChEBI" id="CHEBI:60240"/>
        <label>1</label>
    </ligand>
</feature>
<feature type="binding site" evidence="1">
    <location>
        <position position="599"/>
    </location>
    <ligand>
        <name>a divalent metal cation</name>
        <dbReference type="ChEBI" id="CHEBI:60240"/>
        <label>1</label>
    </ligand>
</feature>
<feature type="binding site" evidence="1">
    <location>
        <position position="647"/>
    </location>
    <ligand>
        <name>a divalent metal cation</name>
        <dbReference type="ChEBI" id="CHEBI:60240"/>
        <label>1</label>
    </ligand>
</feature>
<feature type="binding site" evidence="1">
    <location>
        <position position="647"/>
    </location>
    <ligand>
        <name>a divalent metal cation</name>
        <dbReference type="ChEBI" id="CHEBI:60240"/>
        <label>2</label>
    </ligand>
</feature>
<feature type="binding site" evidence="1">
    <location>
        <position position="680"/>
    </location>
    <ligand>
        <name>a divalent metal cation</name>
        <dbReference type="ChEBI" id="CHEBI:60240"/>
        <label>2</label>
    </ligand>
</feature>
<feature type="binding site" evidence="1">
    <location>
        <position position="792"/>
    </location>
    <ligand>
        <name>a divalent metal cation</name>
        <dbReference type="ChEBI" id="CHEBI:60240"/>
        <label>2</label>
    </ligand>
</feature>
<feature type="binding site" evidence="1">
    <location>
        <position position="824"/>
    </location>
    <ligand>
        <name>a divalent metal cation</name>
        <dbReference type="ChEBI" id="CHEBI:60240"/>
        <label>2</label>
    </ligand>
</feature>
<feature type="binding site" evidence="1">
    <location>
        <position position="965"/>
    </location>
    <ligand>
        <name>substrate</name>
    </ligand>
</feature>
<feature type="binding site" evidence="1">
    <location>
        <begin position="1035"/>
        <end position="1042"/>
    </location>
    <ligand>
        <name>substrate</name>
    </ligand>
</feature>
<feature type="site" description="Transition state stabilizer" evidence="1">
    <location>
        <position position="681"/>
    </location>
</feature>
<feature type="site" description="Transition state stabilizer" evidence="1">
    <location>
        <position position="684"/>
    </location>
</feature>
<feature type="modified residue" description="Pentaglycyl murein peptidoglycan amidated threonine" evidence="4">
    <location>
        <position position="1185"/>
    </location>
</feature>
<evidence type="ECO:0000250" key="1"/>
<evidence type="ECO:0000255" key="2"/>
<evidence type="ECO:0000255" key="3">
    <source>
        <dbReference type="PROSITE-ProRule" id="PRU00272"/>
    </source>
</evidence>
<evidence type="ECO:0000255" key="4">
    <source>
        <dbReference type="PROSITE-ProRule" id="PRU00477"/>
    </source>
</evidence>
<evidence type="ECO:0000256" key="5">
    <source>
        <dbReference type="SAM" id="MobiDB-lite"/>
    </source>
</evidence>
<evidence type="ECO:0000269" key="6">
    <source>
    </source>
</evidence>
<evidence type="ECO:0000269" key="7">
    <source>
    </source>
</evidence>
<evidence type="ECO:0000269" key="8">
    <source>
    </source>
</evidence>
<evidence type="ECO:0000305" key="9"/>
<accession>P54602</accession>
<proteinExistence type="evidence at protein level"/>
<comment type="function">
    <text evidence="6">Sugar-nonspecific endonuclease that yields nucleotide 3'-monophosphate products. No 5'-nucleotidase activity was detected, using 5'-AMP as the substrate, in the presence of diverse divalent metals and with various pH values.</text>
</comment>
<comment type="cofactor">
    <cofactor evidence="6">
        <name>Ca(2+)</name>
        <dbReference type="ChEBI" id="CHEBI:29108"/>
    </cofactor>
    <cofactor evidence="6">
        <name>Mn(2+)</name>
        <dbReference type="ChEBI" id="CHEBI:29035"/>
    </cofactor>
</comment>
<comment type="activity regulation">
    <text evidence="6">Requires a minimum of 0.1 mM of calcium for a significant activity. Maximal activity was observed with concentrations of calcium between 1 to 5 mM. Is 10-fold less active with the corresponding concentrations of manganese. Inhibited by NaCl at concentrations of 100 mM and higher.</text>
</comment>
<comment type="biophysicochemical properties">
    <phDependence>
        <text evidence="6">Optimum pH is 9.0.</text>
    </phDependence>
</comment>
<comment type="subcellular location">
    <subcellularLocation>
        <location evidence="6 7 8">Secreted</location>
        <location evidence="6 7 8">Cell wall</location>
        <topology evidence="4">Peptidoglycan-anchor</topology>
    </subcellularLocation>
    <text evidence="7 8">Anchored to the cell wall by sortase SrtD.</text>
</comment>
<comment type="similarity">
    <text evidence="9">In the C-terminal section; belongs to the 5'-nucleotidase family.</text>
</comment>
<dbReference type="EC" id="3.1.31.-" evidence="6"/>
<dbReference type="EMBL" id="X96983">
    <property type="protein sequence ID" value="CAA65702.1"/>
    <property type="molecule type" value="Genomic_DNA"/>
</dbReference>
<dbReference type="EMBL" id="AL009126">
    <property type="protein sequence ID" value="CAB12747.1"/>
    <property type="molecule type" value="Genomic_DNA"/>
</dbReference>
<dbReference type="PIR" id="F69823">
    <property type="entry name" value="F69823"/>
</dbReference>
<dbReference type="RefSeq" id="WP_010886455.1">
    <property type="nucleotide sequence ID" value="NZ_OZ025638.1"/>
</dbReference>
<dbReference type="SMR" id="P54602"/>
<dbReference type="FunCoup" id="P54602">
    <property type="interactions" value="63"/>
</dbReference>
<dbReference type="IntAct" id="P54602">
    <property type="interactions" value="3"/>
</dbReference>
<dbReference type="STRING" id="224308.BSU09190"/>
<dbReference type="PaxDb" id="224308-BSU09190"/>
<dbReference type="EnsemblBacteria" id="CAB12747">
    <property type="protein sequence ID" value="CAB12747"/>
    <property type="gene ID" value="BSU_09190"/>
</dbReference>
<dbReference type="GeneID" id="936241"/>
<dbReference type="KEGG" id="bsu:BSU09190"/>
<dbReference type="PATRIC" id="fig|224308.43.peg.960"/>
<dbReference type="eggNOG" id="COG0737">
    <property type="taxonomic scope" value="Bacteria"/>
</dbReference>
<dbReference type="eggNOG" id="COG1525">
    <property type="taxonomic scope" value="Bacteria"/>
</dbReference>
<dbReference type="eggNOG" id="COG4085">
    <property type="taxonomic scope" value="Bacteria"/>
</dbReference>
<dbReference type="InParanoid" id="P54602"/>
<dbReference type="OrthoDB" id="9775118at2"/>
<dbReference type="BioCyc" id="BSUB:BSU09190-MONOMER"/>
<dbReference type="Proteomes" id="UP000001570">
    <property type="component" value="Chromosome"/>
</dbReference>
<dbReference type="GO" id="GO:0005576">
    <property type="term" value="C:extracellular region"/>
    <property type="evidence" value="ECO:0007669"/>
    <property type="project" value="UniProtKB-KW"/>
</dbReference>
<dbReference type="GO" id="GO:0030288">
    <property type="term" value="C:outer membrane-bounded periplasmic space"/>
    <property type="evidence" value="ECO:0000318"/>
    <property type="project" value="GO_Central"/>
</dbReference>
<dbReference type="GO" id="GO:0008253">
    <property type="term" value="F:5'-nucleotidase activity"/>
    <property type="evidence" value="ECO:0000318"/>
    <property type="project" value="GO_Central"/>
</dbReference>
<dbReference type="GO" id="GO:0004519">
    <property type="term" value="F:endonuclease activity"/>
    <property type="evidence" value="ECO:0007669"/>
    <property type="project" value="UniProtKB-KW"/>
</dbReference>
<dbReference type="GO" id="GO:0046872">
    <property type="term" value="F:metal ion binding"/>
    <property type="evidence" value="ECO:0007669"/>
    <property type="project" value="UniProtKB-KW"/>
</dbReference>
<dbReference type="GO" id="GO:0000166">
    <property type="term" value="F:nucleotide binding"/>
    <property type="evidence" value="ECO:0007669"/>
    <property type="project" value="UniProtKB-KW"/>
</dbReference>
<dbReference type="GO" id="GO:0008768">
    <property type="term" value="F:UDP-sugar diphosphatase activity"/>
    <property type="evidence" value="ECO:0000318"/>
    <property type="project" value="GO_Central"/>
</dbReference>
<dbReference type="GO" id="GO:0009166">
    <property type="term" value="P:nucleotide catabolic process"/>
    <property type="evidence" value="ECO:0007669"/>
    <property type="project" value="InterPro"/>
</dbReference>
<dbReference type="CDD" id="cd07412">
    <property type="entry name" value="MPP_YhcR_N"/>
    <property type="match status" value="1"/>
</dbReference>
<dbReference type="CDD" id="cd00175">
    <property type="entry name" value="SNc"/>
    <property type="match status" value="1"/>
</dbReference>
<dbReference type="CDD" id="cd04486">
    <property type="entry name" value="YhcR_OBF_like"/>
    <property type="match status" value="2"/>
</dbReference>
<dbReference type="FunFam" id="3.60.21.10:FF:000052">
    <property type="entry name" value="Endonuclease YhcR"/>
    <property type="match status" value="1"/>
</dbReference>
<dbReference type="Gene3D" id="2.40.50.90">
    <property type="match status" value="1"/>
</dbReference>
<dbReference type="Gene3D" id="3.60.21.10">
    <property type="match status" value="1"/>
</dbReference>
<dbReference type="Gene3D" id="3.90.780.10">
    <property type="entry name" value="5'-Nucleotidase, C-terminal domain"/>
    <property type="match status" value="1"/>
</dbReference>
<dbReference type="InterPro" id="IPR008334">
    <property type="entry name" value="5'-Nucleotdase_C"/>
</dbReference>
<dbReference type="InterPro" id="IPR036907">
    <property type="entry name" value="5'-Nucleotdase_C_sf"/>
</dbReference>
<dbReference type="InterPro" id="IPR006146">
    <property type="entry name" value="5'-Nucleotdase_CS"/>
</dbReference>
<dbReference type="InterPro" id="IPR006179">
    <property type="entry name" value="5_nucleotidase/apyrase"/>
</dbReference>
<dbReference type="InterPro" id="IPR004843">
    <property type="entry name" value="Calcineurin-like_PHP_ApaH"/>
</dbReference>
<dbReference type="InterPro" id="IPR019931">
    <property type="entry name" value="LPXTG_anchor"/>
</dbReference>
<dbReference type="InterPro" id="IPR029052">
    <property type="entry name" value="Metallo-depent_PP-like"/>
</dbReference>
<dbReference type="InterPro" id="IPR012340">
    <property type="entry name" value="NA-bd_OB-fold"/>
</dbReference>
<dbReference type="InterPro" id="IPR035437">
    <property type="entry name" value="SNase_OB-fold_sf"/>
</dbReference>
<dbReference type="InterPro" id="IPR016071">
    <property type="entry name" value="Staphylococal_nuclease_OB-fold"/>
</dbReference>
<dbReference type="InterPro" id="IPR041831">
    <property type="entry name" value="YhcR_MPP"/>
</dbReference>
<dbReference type="InterPro" id="IPR045939">
    <property type="entry name" value="YhcR_N"/>
</dbReference>
<dbReference type="NCBIfam" id="TIGR01167">
    <property type="entry name" value="LPXTG_anchor"/>
    <property type="match status" value="1"/>
</dbReference>
<dbReference type="PANTHER" id="PTHR11575:SF24">
    <property type="entry name" value="5'-NUCLEOTIDASE"/>
    <property type="match status" value="1"/>
</dbReference>
<dbReference type="PANTHER" id="PTHR11575">
    <property type="entry name" value="5'-NUCLEOTIDASE-RELATED"/>
    <property type="match status" value="1"/>
</dbReference>
<dbReference type="Pfam" id="PF02872">
    <property type="entry name" value="5_nucleotid_C"/>
    <property type="match status" value="1"/>
</dbReference>
<dbReference type="Pfam" id="PF19886">
    <property type="entry name" value="DUF6359"/>
    <property type="match status" value="1"/>
</dbReference>
<dbReference type="Pfam" id="PF00746">
    <property type="entry name" value="Gram_pos_anchor"/>
    <property type="match status" value="1"/>
</dbReference>
<dbReference type="Pfam" id="PF00149">
    <property type="entry name" value="Metallophos"/>
    <property type="match status" value="1"/>
</dbReference>
<dbReference type="Pfam" id="PF00565">
    <property type="entry name" value="SNase"/>
    <property type="match status" value="1"/>
</dbReference>
<dbReference type="PRINTS" id="PR01607">
    <property type="entry name" value="APYRASEFAMLY"/>
</dbReference>
<dbReference type="SMART" id="SM00318">
    <property type="entry name" value="SNc"/>
    <property type="match status" value="1"/>
</dbReference>
<dbReference type="SUPFAM" id="SSF55816">
    <property type="entry name" value="5'-nucleotidase (syn. UDP-sugar hydrolase), C-terminal domain"/>
    <property type="match status" value="1"/>
</dbReference>
<dbReference type="SUPFAM" id="SSF56300">
    <property type="entry name" value="Metallo-dependent phosphatases"/>
    <property type="match status" value="1"/>
</dbReference>
<dbReference type="SUPFAM" id="SSF50249">
    <property type="entry name" value="Nucleic acid-binding proteins"/>
    <property type="match status" value="1"/>
</dbReference>
<dbReference type="SUPFAM" id="SSF50199">
    <property type="entry name" value="Staphylococcal nuclease"/>
    <property type="match status" value="1"/>
</dbReference>
<dbReference type="PROSITE" id="PS00786">
    <property type="entry name" value="5_NUCLEOTIDASE_2"/>
    <property type="match status" value="1"/>
</dbReference>
<dbReference type="PROSITE" id="PS50847">
    <property type="entry name" value="GRAM_POS_ANCHORING"/>
    <property type="match status" value="1"/>
</dbReference>
<dbReference type="PROSITE" id="PS50830">
    <property type="entry name" value="TNASE_3"/>
    <property type="match status" value="1"/>
</dbReference>
<reference key="1">
    <citation type="journal article" date="1996" name="Microbiology">
        <title>A 22 kb DNA sequence in the cspB-glpPFKD region at 75 degrees on the Bacillus subtilis chromosome.</title>
        <authorList>
            <person name="Noback M.A."/>
            <person name="Terpstra P."/>
            <person name="Holsappel S."/>
            <person name="Venema G."/>
            <person name="Bron S."/>
        </authorList>
    </citation>
    <scope>NUCLEOTIDE SEQUENCE [GENOMIC DNA]</scope>
    <source>
        <strain>168</strain>
    </source>
</reference>
<reference key="2">
    <citation type="journal article" date="1997" name="Nature">
        <title>The complete genome sequence of the Gram-positive bacterium Bacillus subtilis.</title>
        <authorList>
            <person name="Kunst F."/>
            <person name="Ogasawara N."/>
            <person name="Moszer I."/>
            <person name="Albertini A.M."/>
            <person name="Alloni G."/>
            <person name="Azevedo V."/>
            <person name="Bertero M.G."/>
            <person name="Bessieres P."/>
            <person name="Bolotin A."/>
            <person name="Borchert S."/>
            <person name="Borriss R."/>
            <person name="Boursier L."/>
            <person name="Brans A."/>
            <person name="Braun M."/>
            <person name="Brignell S.C."/>
            <person name="Bron S."/>
            <person name="Brouillet S."/>
            <person name="Bruschi C.V."/>
            <person name="Caldwell B."/>
            <person name="Capuano V."/>
            <person name="Carter N.M."/>
            <person name="Choi S.-K."/>
            <person name="Codani J.-J."/>
            <person name="Connerton I.F."/>
            <person name="Cummings N.J."/>
            <person name="Daniel R.A."/>
            <person name="Denizot F."/>
            <person name="Devine K.M."/>
            <person name="Duesterhoeft A."/>
            <person name="Ehrlich S.D."/>
            <person name="Emmerson P.T."/>
            <person name="Entian K.-D."/>
            <person name="Errington J."/>
            <person name="Fabret C."/>
            <person name="Ferrari E."/>
            <person name="Foulger D."/>
            <person name="Fritz C."/>
            <person name="Fujita M."/>
            <person name="Fujita Y."/>
            <person name="Fuma S."/>
            <person name="Galizzi A."/>
            <person name="Galleron N."/>
            <person name="Ghim S.-Y."/>
            <person name="Glaser P."/>
            <person name="Goffeau A."/>
            <person name="Golightly E.J."/>
            <person name="Grandi G."/>
            <person name="Guiseppi G."/>
            <person name="Guy B.J."/>
            <person name="Haga K."/>
            <person name="Haiech J."/>
            <person name="Harwood C.R."/>
            <person name="Henaut A."/>
            <person name="Hilbert H."/>
            <person name="Holsappel S."/>
            <person name="Hosono S."/>
            <person name="Hullo M.-F."/>
            <person name="Itaya M."/>
            <person name="Jones L.-M."/>
            <person name="Joris B."/>
            <person name="Karamata D."/>
            <person name="Kasahara Y."/>
            <person name="Klaerr-Blanchard M."/>
            <person name="Klein C."/>
            <person name="Kobayashi Y."/>
            <person name="Koetter P."/>
            <person name="Koningstein G."/>
            <person name="Krogh S."/>
            <person name="Kumano M."/>
            <person name="Kurita K."/>
            <person name="Lapidus A."/>
            <person name="Lardinois S."/>
            <person name="Lauber J."/>
            <person name="Lazarevic V."/>
            <person name="Lee S.-M."/>
            <person name="Levine A."/>
            <person name="Liu H."/>
            <person name="Masuda S."/>
            <person name="Mauel C."/>
            <person name="Medigue C."/>
            <person name="Medina N."/>
            <person name="Mellado R.P."/>
            <person name="Mizuno M."/>
            <person name="Moestl D."/>
            <person name="Nakai S."/>
            <person name="Noback M."/>
            <person name="Noone D."/>
            <person name="O'Reilly M."/>
            <person name="Ogawa K."/>
            <person name="Ogiwara A."/>
            <person name="Oudega B."/>
            <person name="Park S.-H."/>
            <person name="Parro V."/>
            <person name="Pohl T.M."/>
            <person name="Portetelle D."/>
            <person name="Porwollik S."/>
            <person name="Prescott A.M."/>
            <person name="Presecan E."/>
            <person name="Pujic P."/>
            <person name="Purnelle B."/>
            <person name="Rapoport G."/>
            <person name="Rey M."/>
            <person name="Reynolds S."/>
            <person name="Rieger M."/>
            <person name="Rivolta C."/>
            <person name="Rocha E."/>
            <person name="Roche B."/>
            <person name="Rose M."/>
            <person name="Sadaie Y."/>
            <person name="Sato T."/>
            <person name="Scanlan E."/>
            <person name="Schleich S."/>
            <person name="Schroeter R."/>
            <person name="Scoffone F."/>
            <person name="Sekiguchi J."/>
            <person name="Sekowska A."/>
            <person name="Seror S.J."/>
            <person name="Serror P."/>
            <person name="Shin B.-S."/>
            <person name="Soldo B."/>
            <person name="Sorokin A."/>
            <person name="Tacconi E."/>
            <person name="Takagi T."/>
            <person name="Takahashi H."/>
            <person name="Takemaru K."/>
            <person name="Takeuchi M."/>
            <person name="Tamakoshi A."/>
            <person name="Tanaka T."/>
            <person name="Terpstra P."/>
            <person name="Tognoni A."/>
            <person name="Tosato V."/>
            <person name="Uchiyama S."/>
            <person name="Vandenbol M."/>
            <person name="Vannier F."/>
            <person name="Vassarotti A."/>
            <person name="Viari A."/>
            <person name="Wambutt R."/>
            <person name="Wedler E."/>
            <person name="Wedler H."/>
            <person name="Weitzenegger T."/>
            <person name="Winters P."/>
            <person name="Wipat A."/>
            <person name="Yamamoto H."/>
            <person name="Yamane K."/>
            <person name="Yasumoto K."/>
            <person name="Yata K."/>
            <person name="Yoshida K."/>
            <person name="Yoshikawa H.-F."/>
            <person name="Zumstein E."/>
            <person name="Yoshikawa H."/>
            <person name="Danchin A."/>
        </authorList>
    </citation>
    <scope>NUCLEOTIDE SEQUENCE [LARGE SCALE GENOMIC DNA]</scope>
    <source>
        <strain>168</strain>
    </source>
</reference>
<reference key="3">
    <citation type="journal article" date="2004" name="J. Bacteriol.">
        <title>Bacillus subtilis YhcR, a high-molecular-weight, nonspecific endonuclease with a unique domain structure.</title>
        <authorList>
            <person name="Oussenko I.A."/>
            <person name="Sanchez R."/>
            <person name="Bechhofer D.H."/>
        </authorList>
    </citation>
    <scope>FUNCTION</scope>
    <scope>COFACTOR</scope>
    <scope>ACTIVITY REGULATION</scope>
    <scope>BIOPHYSICOCHEMICAL PROPERTIES</scope>
    <scope>SUBCELLULAR LOCATION</scope>
</reference>
<reference key="4">
    <citation type="journal article" date="2011" name="AMB Express">
        <title>Analysis and application of Bacillus subtilis sortases to anchor recombinant proteins on the cell wall.</title>
        <authorList>
            <person name="Nguyen H.D."/>
            <person name="Phan T.T."/>
            <person name="Schumann W."/>
        </authorList>
    </citation>
    <scope>SUBCELLULAR LOCATION</scope>
    <scope>PROCESSING BY SORTASE D</scope>
</reference>
<reference key="5">
    <citation type="journal article" date="2012" name="J. Bacteriol.">
        <title>Functional characterization and localization of a Bacillus subtilis sortase and its substrate and use of this sortase system to covalently anchor a heterologous protein to the B. subtilis cell wall for surface display.</title>
        <authorList>
            <person name="Liew P.X."/>
            <person name="Wang C.L."/>
            <person name="Wong S.L."/>
        </authorList>
    </citation>
    <scope>SUBCELLULAR LOCATION</scope>
    <scope>PROCESSING BY SORTASE D</scope>
</reference>
<sequence length="1217" mass="132686">MLSVEMISRQNRCHYVYKGGNMMRRILHIVLITALMFLNVMYTFEAVKAAEPQQPISIEKAIQQKEGQALVEGYAVGQAVSPQHYKLTSPFSNDYNVALADRKNKTSPEHILPVQIPSAFRSQFGLQTNPLLLGKKITVQGKLENYFNTTGLKNVQSMNVTDDTKTPPAEQQVTINEARGRLNEEVTIKGIITADQNAIGGGKLSTFLQDETGGINIYSPSPEQFPELKEGMDVTVTGKITSYQGLKEIVPNSSGIKINQSNQSLPAPKHLTINELINGSLGDQYEGRLVKLTAFVSSIPSSPAGGGYNVTMIDDDHHAMTLRVMNETGVINELDEGKWYEFTGVLSRYQTFQLLPRKSADLKLLEEQPAPPSAEGEYEGIVDRVVDGDTIHLKSPVLGTTKIRFVNVDAPETYHTPKNDADENQLRFGKKASDYLKTVLSPGDKITVKVGSEAKDSYGRLLGQVITESGSNVNLELVKNGYAPTYFIWPVDNEEDYQQFQAAVAAAKKDQKGIWNENDPLMEMPFEFRAREQGKGLTRYVGDSSNKTYVQPADWKKIAVENRIFFASASEAESAGYKKRQTAPQEHVPLRILSMNDLHGKIDQQYELDLDGNGTVDGTFGRMDYAAAYLKEKKAEKKNSLIVHAGDMIGGSSPVSSLLQDEPTVELMEDIGFDVGTVGNHEFDEGTDELLRILNGGDHPKGTSGYDGQNFPLVCANCKMKSTGEPFLPAYDIINVEGVPVAFIGVVTQSAAGMVMPEGIKNIEFTDEATAVNKAAEELKKKGVKAIAVLAHMSAEQNGNAITGESADLANKTDSEIDVIFAAHNHQVVNGEVNGKLIVQAFEYGKAIGVVDVEIDKTTKDIVKKSAEIVYVDQSKIEPDVSASAILKKYETIAEPIISEVVGEAAVDMEGGYSNDGDTPLGNLIADGMRAAMKTDFALMNGGGIREALKKGPITWGDLYNIQPFGNVLTKLEIKGKDLREIINAQISPVFGPDYSISGFTYTWDKETGKAVDMKMADGTEIQPDATYTLTVNNFMATATGAKYQPIGLLGKNPVTGPEDLEATVEYVKSFDEPIAYTKEGRIKLAEASDIEDPVTEDPITEEPGDDPGTEDPIKEDPRPGEDLPDIKETPGTAPVHQLPPSAISRFNEIPINNTKTADTANSISTLPLQTETAESGSDHQLPDTSAGYYNFMVIGAAVTLSGTYLYVRRKRSASRT</sequence>
<keyword id="KW-0106">Calcium</keyword>
<keyword id="KW-0134">Cell wall</keyword>
<keyword id="KW-0255">Endonuclease</keyword>
<keyword id="KW-0378">Hydrolase</keyword>
<keyword id="KW-0464">Manganese</keyword>
<keyword id="KW-0479">Metal-binding</keyword>
<keyword id="KW-0540">Nuclease</keyword>
<keyword id="KW-0547">Nucleotide-binding</keyword>
<keyword id="KW-0572">Peptidoglycan-anchor</keyword>
<keyword id="KW-1185">Reference proteome</keyword>
<keyword id="KW-0964">Secreted</keyword>
<keyword id="KW-0732">Signal</keyword>
<organism>
    <name type="scientific">Bacillus subtilis (strain 168)</name>
    <dbReference type="NCBI Taxonomy" id="224308"/>
    <lineage>
        <taxon>Bacteria</taxon>
        <taxon>Bacillati</taxon>
        <taxon>Bacillota</taxon>
        <taxon>Bacilli</taxon>
        <taxon>Bacillales</taxon>
        <taxon>Bacillaceae</taxon>
        <taxon>Bacillus</taxon>
    </lineage>
</organism>
<name>YHCR_BACSU</name>